<gene>
    <name evidence="1" type="primary">atpF</name>
    <name type="ordered locus">BAD_1431</name>
</gene>
<keyword id="KW-0066">ATP synthesis</keyword>
<keyword id="KW-1003">Cell membrane</keyword>
<keyword id="KW-0138">CF(0)</keyword>
<keyword id="KW-0375">Hydrogen ion transport</keyword>
<keyword id="KW-0406">Ion transport</keyword>
<keyword id="KW-0472">Membrane</keyword>
<keyword id="KW-1185">Reference proteome</keyword>
<keyword id="KW-0812">Transmembrane</keyword>
<keyword id="KW-1133">Transmembrane helix</keyword>
<keyword id="KW-0813">Transport</keyword>
<organism>
    <name type="scientific">Bifidobacterium adolescentis (strain ATCC 15703 / DSM 20083 / NCTC 11814 / E194a)</name>
    <dbReference type="NCBI Taxonomy" id="367928"/>
    <lineage>
        <taxon>Bacteria</taxon>
        <taxon>Bacillati</taxon>
        <taxon>Actinomycetota</taxon>
        <taxon>Actinomycetes</taxon>
        <taxon>Bifidobacteriales</taxon>
        <taxon>Bifidobacteriaceae</taxon>
        <taxon>Bifidobacterium</taxon>
    </lineage>
</organism>
<name>ATPF_BIFAA</name>
<dbReference type="EMBL" id="AP009256">
    <property type="protein sequence ID" value="BAF40212.1"/>
    <property type="molecule type" value="Genomic_DNA"/>
</dbReference>
<dbReference type="RefSeq" id="WP_011743721.1">
    <property type="nucleotide sequence ID" value="NZ_CAXVKE010000002.1"/>
</dbReference>
<dbReference type="SMR" id="A1A3C9"/>
<dbReference type="STRING" id="367928.BAD_1431"/>
<dbReference type="PaxDb" id="1680-BADO_1600"/>
<dbReference type="GeneID" id="4556211"/>
<dbReference type="KEGG" id="bad:BAD_1431"/>
<dbReference type="HOGENOM" id="CLU_079215_5_0_11"/>
<dbReference type="Proteomes" id="UP000008702">
    <property type="component" value="Chromosome"/>
</dbReference>
<dbReference type="GO" id="GO:0005886">
    <property type="term" value="C:plasma membrane"/>
    <property type="evidence" value="ECO:0007669"/>
    <property type="project" value="UniProtKB-SubCell"/>
</dbReference>
<dbReference type="GO" id="GO:0045259">
    <property type="term" value="C:proton-transporting ATP synthase complex"/>
    <property type="evidence" value="ECO:0007669"/>
    <property type="project" value="UniProtKB-KW"/>
</dbReference>
<dbReference type="GO" id="GO:0046933">
    <property type="term" value="F:proton-transporting ATP synthase activity, rotational mechanism"/>
    <property type="evidence" value="ECO:0007669"/>
    <property type="project" value="UniProtKB-UniRule"/>
</dbReference>
<dbReference type="GO" id="GO:0046961">
    <property type="term" value="F:proton-transporting ATPase activity, rotational mechanism"/>
    <property type="evidence" value="ECO:0007669"/>
    <property type="project" value="TreeGrafter"/>
</dbReference>
<dbReference type="CDD" id="cd06503">
    <property type="entry name" value="ATP-synt_Fo_b"/>
    <property type="match status" value="1"/>
</dbReference>
<dbReference type="Gene3D" id="1.20.5.620">
    <property type="entry name" value="F1F0 ATP synthase subunit B, membrane domain"/>
    <property type="match status" value="1"/>
</dbReference>
<dbReference type="HAMAP" id="MF_01398">
    <property type="entry name" value="ATP_synth_b_bprime"/>
    <property type="match status" value="1"/>
</dbReference>
<dbReference type="InterPro" id="IPR028987">
    <property type="entry name" value="ATP_synth_B-like_membr_sf"/>
</dbReference>
<dbReference type="InterPro" id="IPR002146">
    <property type="entry name" value="ATP_synth_b/b'su_bac/chlpt"/>
</dbReference>
<dbReference type="InterPro" id="IPR005864">
    <property type="entry name" value="ATP_synth_F0_bsu_bac"/>
</dbReference>
<dbReference type="InterPro" id="IPR050059">
    <property type="entry name" value="ATP_synthase_B_chain"/>
</dbReference>
<dbReference type="NCBIfam" id="TIGR01144">
    <property type="entry name" value="ATP_synt_b"/>
    <property type="match status" value="1"/>
</dbReference>
<dbReference type="NCBIfam" id="NF004412">
    <property type="entry name" value="PRK05759.1-3"/>
    <property type="match status" value="1"/>
</dbReference>
<dbReference type="PANTHER" id="PTHR33445:SF1">
    <property type="entry name" value="ATP SYNTHASE SUBUNIT B"/>
    <property type="match status" value="1"/>
</dbReference>
<dbReference type="PANTHER" id="PTHR33445">
    <property type="entry name" value="ATP SYNTHASE SUBUNIT B', CHLOROPLASTIC"/>
    <property type="match status" value="1"/>
</dbReference>
<dbReference type="Pfam" id="PF00430">
    <property type="entry name" value="ATP-synt_B"/>
    <property type="match status" value="1"/>
</dbReference>
<dbReference type="SUPFAM" id="SSF81573">
    <property type="entry name" value="F1F0 ATP synthase subunit B, membrane domain"/>
    <property type="match status" value="1"/>
</dbReference>
<reference key="1">
    <citation type="submission" date="2006-12" db="EMBL/GenBank/DDBJ databases">
        <title>Bifidobacterium adolescentis complete genome sequence.</title>
        <authorList>
            <person name="Suzuki T."/>
            <person name="Tsuda Y."/>
            <person name="Kanou N."/>
            <person name="Inoue T."/>
            <person name="Kumazaki K."/>
            <person name="Nagano S."/>
            <person name="Hirai S."/>
            <person name="Tanaka K."/>
            <person name="Watanabe K."/>
        </authorList>
    </citation>
    <scope>NUCLEOTIDE SEQUENCE [LARGE SCALE GENOMIC DNA]</scope>
    <source>
        <strain>ATCC 15703 / DSM 20083 / NCTC 11814 / E194a</strain>
    </source>
</reference>
<feature type="chain" id="PRO_0000368352" description="ATP synthase subunit b">
    <location>
        <begin position="1"/>
        <end position="173"/>
    </location>
</feature>
<feature type="transmembrane region" description="Helical" evidence="1">
    <location>
        <begin position="18"/>
        <end position="38"/>
    </location>
</feature>
<protein>
    <recommendedName>
        <fullName evidence="1">ATP synthase subunit b</fullName>
    </recommendedName>
    <alternativeName>
        <fullName evidence="1">ATP synthase F(0) sector subunit b</fullName>
    </alternativeName>
    <alternativeName>
        <fullName evidence="1">ATPase subunit I</fullName>
    </alternativeName>
    <alternativeName>
        <fullName evidence="1">F-type ATPase subunit b</fullName>
        <shortName evidence="1">F-ATPase subunit b</shortName>
    </alternativeName>
</protein>
<accession>A1A3C9</accession>
<comment type="function">
    <text evidence="1">F(1)F(0) ATP synthase produces ATP from ADP in the presence of a proton or sodium gradient. F-type ATPases consist of two structural domains, F(1) containing the extramembraneous catalytic core and F(0) containing the membrane proton channel, linked together by a central stalk and a peripheral stalk. During catalysis, ATP synthesis in the catalytic domain of F(1) is coupled via a rotary mechanism of the central stalk subunits to proton translocation.</text>
</comment>
<comment type="function">
    <text evidence="1">Component of the F(0) channel, it forms part of the peripheral stalk, linking F(1) to F(0).</text>
</comment>
<comment type="subunit">
    <text evidence="1">F-type ATPases have 2 components, F(1) - the catalytic core - and F(0) - the membrane proton channel. F(1) has five subunits: alpha(3), beta(3), gamma(1), delta(1), epsilon(1). F(0) has three main subunits: a(1), b(2) and c(10-14). The alpha and beta chains form an alternating ring which encloses part of the gamma chain. F(1) is attached to F(0) by a central stalk formed by the gamma and epsilon chains, while a peripheral stalk is formed by the delta and b chains.</text>
</comment>
<comment type="subcellular location">
    <subcellularLocation>
        <location evidence="1">Cell membrane</location>
        <topology evidence="1">Single-pass membrane protein</topology>
    </subcellularLocation>
</comment>
<comment type="similarity">
    <text evidence="1">Belongs to the ATPase B chain family.</text>
</comment>
<evidence type="ECO:0000255" key="1">
    <source>
        <dbReference type="HAMAP-Rule" id="MF_01398"/>
    </source>
</evidence>
<sequence>MVTAASEMELFLPKSYDIFWSLVILIIVAVFFYKFFLPKFQAVFDERAAKIEGGIAKAEQAQKDADEAKAKYDAQLSNARVEASKIRDDARAEASHIIADARTRAEADAAQITATAQRSIESQQQQALVSLKGEVGVLATALAGKILGSKLESDDVQSTMIDQMIAELDSDKK</sequence>
<proteinExistence type="inferred from homology"/>